<proteinExistence type="evidence at transcript level"/>
<evidence type="ECO:0000250" key="1"/>
<evidence type="ECO:0000250" key="2">
    <source>
        <dbReference type="UniProtKB" id="O35887"/>
    </source>
</evidence>
<evidence type="ECO:0000250" key="3">
    <source>
        <dbReference type="UniProtKB" id="O43852"/>
    </source>
</evidence>
<evidence type="ECO:0000255" key="4"/>
<evidence type="ECO:0000255" key="5">
    <source>
        <dbReference type="PROSITE-ProRule" id="PRU00448"/>
    </source>
</evidence>
<evidence type="ECO:0000305" key="6"/>
<keyword id="KW-0007">Acetylation</keyword>
<keyword id="KW-0106">Calcium</keyword>
<keyword id="KW-0256">Endoplasmic reticulum</keyword>
<keyword id="KW-0325">Glycoprotein</keyword>
<keyword id="KW-0333">Golgi apparatus</keyword>
<keyword id="KW-0472">Membrane</keyword>
<keyword id="KW-0479">Metal-binding</keyword>
<keyword id="KW-0597">Phosphoprotein</keyword>
<keyword id="KW-1185">Reference proteome</keyword>
<keyword id="KW-0677">Repeat</keyword>
<keyword id="KW-0703">Sarcoplasmic reticulum</keyword>
<keyword id="KW-0964">Secreted</keyword>
<keyword id="KW-0732">Signal</keyword>
<name>CALU_MESAU</name>
<gene>
    <name type="primary">CALU</name>
</gene>
<protein>
    <recommendedName>
        <fullName>Calumenin</fullName>
    </recommendedName>
</protein>
<sequence>MDLRQFLLCLSLCTAFALSKPTEKKDRVHHEPQLSDKVHNDAQNFDYDHDAFLGAEEAKSFDQLTPEESKERLGKIVSKIDDDKDGFVTVDELKGWIKFAQKRWIHEDVERQWKGHDLNEDGLVSWEEYKNATYGYVLDDPDPDDGFNYKQMMVRDERRFKMADKDGDLIATKEEFTAFPHPDEYDYMKDIVVQETMEDIDKNADGFIDLEEYIGDMYSHDGNADEPEWVKTEREQFVEFRDKNRDGRMDKEETKDWILPSDYDHAEAEARHLVYESDQNKDGKLTKEEIVDKYDLFVGSQATDFGEALVRHDEF</sequence>
<reference key="1">
    <citation type="submission" date="2005-04" db="EMBL/GenBank/DDBJ databases">
        <title>Hamster calumenin cDNA sequence from lung.</title>
        <authorList>
            <person name="Wajih N."/>
            <person name="Wallin R."/>
        </authorList>
    </citation>
    <scope>NUCLEOTIDE SEQUENCE [MRNA]</scope>
    <source>
        <tissue>Lung</tissue>
    </source>
</reference>
<organism>
    <name type="scientific">Mesocricetus auratus</name>
    <name type="common">Golden hamster</name>
    <dbReference type="NCBI Taxonomy" id="10036"/>
    <lineage>
        <taxon>Eukaryota</taxon>
        <taxon>Metazoa</taxon>
        <taxon>Chordata</taxon>
        <taxon>Craniata</taxon>
        <taxon>Vertebrata</taxon>
        <taxon>Euteleostomi</taxon>
        <taxon>Mammalia</taxon>
        <taxon>Eutheria</taxon>
        <taxon>Euarchontoglires</taxon>
        <taxon>Glires</taxon>
        <taxon>Rodentia</taxon>
        <taxon>Myomorpha</taxon>
        <taxon>Muroidea</taxon>
        <taxon>Cricetidae</taxon>
        <taxon>Cricetinae</taxon>
        <taxon>Mesocricetus</taxon>
    </lineage>
</organism>
<accession>Q4U471</accession>
<dbReference type="EMBL" id="DQ013267">
    <property type="protein sequence ID" value="AAY34440.1"/>
    <property type="molecule type" value="mRNA"/>
</dbReference>
<dbReference type="RefSeq" id="NP_001297506.1">
    <property type="nucleotide sequence ID" value="NM_001310577.1"/>
</dbReference>
<dbReference type="SMR" id="Q4U471"/>
<dbReference type="STRING" id="10036.ENSMAUP00000025124"/>
<dbReference type="GlyCosmos" id="Q4U471">
    <property type="glycosylation" value="1 site, No reported glycans"/>
</dbReference>
<dbReference type="GeneID" id="101825241"/>
<dbReference type="KEGG" id="maua:101825241"/>
<dbReference type="CTD" id="813"/>
<dbReference type="eggNOG" id="KOG4223">
    <property type="taxonomic scope" value="Eukaryota"/>
</dbReference>
<dbReference type="OrthoDB" id="293868at2759"/>
<dbReference type="Proteomes" id="UP000189706">
    <property type="component" value="Unplaced"/>
</dbReference>
<dbReference type="GO" id="GO:0005789">
    <property type="term" value="C:endoplasmic reticulum membrane"/>
    <property type="evidence" value="ECO:0000250"/>
    <property type="project" value="UniProtKB"/>
</dbReference>
<dbReference type="GO" id="GO:0005576">
    <property type="term" value="C:extracellular region"/>
    <property type="evidence" value="ECO:0000250"/>
    <property type="project" value="UniProtKB"/>
</dbReference>
<dbReference type="GO" id="GO:0005794">
    <property type="term" value="C:Golgi apparatus"/>
    <property type="evidence" value="ECO:0000250"/>
    <property type="project" value="UniProtKB"/>
</dbReference>
<dbReference type="GO" id="GO:0042470">
    <property type="term" value="C:melanosome"/>
    <property type="evidence" value="ECO:0007669"/>
    <property type="project" value="UniProtKB-SubCell"/>
</dbReference>
<dbReference type="GO" id="GO:0033018">
    <property type="term" value="C:sarcoplasmic reticulum lumen"/>
    <property type="evidence" value="ECO:0007669"/>
    <property type="project" value="UniProtKB-SubCell"/>
</dbReference>
<dbReference type="GO" id="GO:0005509">
    <property type="term" value="F:calcium ion binding"/>
    <property type="evidence" value="ECO:0007669"/>
    <property type="project" value="InterPro"/>
</dbReference>
<dbReference type="CDD" id="cd16228">
    <property type="entry name" value="EFh_CREC_Calumenin"/>
    <property type="match status" value="1"/>
</dbReference>
<dbReference type="FunFam" id="1.10.238.10:FF:000090">
    <property type="entry name" value="calumenin isoform X2"/>
    <property type="match status" value="1"/>
</dbReference>
<dbReference type="FunFam" id="1.10.238.10:FF:000109">
    <property type="entry name" value="calumenin isoform X2"/>
    <property type="match status" value="1"/>
</dbReference>
<dbReference type="FunFam" id="1.10.238.10:FF:000110">
    <property type="entry name" value="calumenin isoform X2"/>
    <property type="match status" value="1"/>
</dbReference>
<dbReference type="Gene3D" id="1.10.238.10">
    <property type="entry name" value="EF-hand"/>
    <property type="match status" value="3"/>
</dbReference>
<dbReference type="InterPro" id="IPR011992">
    <property type="entry name" value="EF-hand-dom_pair"/>
</dbReference>
<dbReference type="InterPro" id="IPR018247">
    <property type="entry name" value="EF_Hand_1_Ca_BS"/>
</dbReference>
<dbReference type="InterPro" id="IPR002048">
    <property type="entry name" value="EF_hand_dom"/>
</dbReference>
<dbReference type="PANTHER" id="PTHR10827:SF76">
    <property type="entry name" value="CALUMENIN"/>
    <property type="match status" value="1"/>
</dbReference>
<dbReference type="PANTHER" id="PTHR10827">
    <property type="entry name" value="RETICULOCALBIN"/>
    <property type="match status" value="1"/>
</dbReference>
<dbReference type="Pfam" id="PF13202">
    <property type="entry name" value="EF-hand_5"/>
    <property type="match status" value="3"/>
</dbReference>
<dbReference type="SMART" id="SM00054">
    <property type="entry name" value="EFh"/>
    <property type="match status" value="3"/>
</dbReference>
<dbReference type="SUPFAM" id="SSF47473">
    <property type="entry name" value="EF-hand"/>
    <property type="match status" value="2"/>
</dbReference>
<dbReference type="PROSITE" id="PS00018">
    <property type="entry name" value="EF_HAND_1"/>
    <property type="match status" value="4"/>
</dbReference>
<dbReference type="PROSITE" id="PS50222">
    <property type="entry name" value="EF_HAND_2"/>
    <property type="match status" value="6"/>
</dbReference>
<comment type="function">
    <text evidence="1">Involved in regulation of vitamin K-dependent carboxylation of multiple N-terminal glutamate residues. Seems to inhibit gamma-carboxylase GGCX. Binds 7 calcium ions with a low affinity (By similarity).</text>
</comment>
<comment type="subunit">
    <text evidence="1">Interacts with GGCX.</text>
</comment>
<comment type="subcellular location">
    <subcellularLocation>
        <location evidence="3">Endoplasmic reticulum membrane</location>
    </subcellularLocation>
    <subcellularLocation>
        <location evidence="3">Golgi apparatus</location>
    </subcellularLocation>
    <subcellularLocation>
        <location evidence="3">Secreted</location>
    </subcellularLocation>
    <subcellularLocation>
        <location evidence="3">Melanosome</location>
    </subcellularLocation>
    <subcellularLocation>
        <location evidence="3">Sarcoplasmic reticulum lumen</location>
    </subcellularLocation>
</comment>
<comment type="similarity">
    <text evidence="6">Belongs to the CREC family.</text>
</comment>
<feature type="signal peptide" evidence="1">
    <location>
        <begin position="1"/>
        <end position="19"/>
    </location>
</feature>
<feature type="chain" id="PRO_0000364190" description="Calumenin">
    <location>
        <begin position="20"/>
        <end position="315"/>
    </location>
</feature>
<feature type="domain" description="EF-hand 1" evidence="5">
    <location>
        <begin position="68"/>
        <end position="103"/>
    </location>
</feature>
<feature type="domain" description="EF-hand 2" evidence="5">
    <location>
        <begin position="104"/>
        <end position="139"/>
    </location>
</feature>
<feature type="domain" description="EF-hand 3" evidence="5">
    <location>
        <begin position="151"/>
        <end position="186"/>
    </location>
</feature>
<feature type="domain" description="EF-hand 4" evidence="5">
    <location>
        <begin position="188"/>
        <end position="223"/>
    </location>
</feature>
<feature type="domain" description="EF-hand 5" evidence="5">
    <location>
        <begin position="229"/>
        <end position="264"/>
    </location>
</feature>
<feature type="domain" description="EF-hand 6" evidence="5">
    <location>
        <begin position="265"/>
        <end position="300"/>
    </location>
</feature>
<feature type="short sequence motif" description="Prevents secretion from ER" evidence="1">
    <location>
        <begin position="312"/>
        <end position="315"/>
    </location>
</feature>
<feature type="binding site" evidence="5">
    <location>
        <position position="81"/>
    </location>
    <ligand>
        <name>Ca(2+)</name>
        <dbReference type="ChEBI" id="CHEBI:29108"/>
        <label>1</label>
    </ligand>
</feature>
<feature type="binding site" evidence="5">
    <location>
        <position position="83"/>
    </location>
    <ligand>
        <name>Ca(2+)</name>
        <dbReference type="ChEBI" id="CHEBI:29108"/>
        <label>1</label>
    </ligand>
</feature>
<feature type="binding site" evidence="5">
    <location>
        <position position="85"/>
    </location>
    <ligand>
        <name>Ca(2+)</name>
        <dbReference type="ChEBI" id="CHEBI:29108"/>
        <label>1</label>
    </ligand>
</feature>
<feature type="binding site" evidence="5">
    <location>
        <position position="92"/>
    </location>
    <ligand>
        <name>Ca(2+)</name>
        <dbReference type="ChEBI" id="CHEBI:29108"/>
        <label>1</label>
    </ligand>
</feature>
<feature type="binding site" evidence="5">
    <location>
        <position position="117"/>
    </location>
    <ligand>
        <name>Ca(2+)</name>
        <dbReference type="ChEBI" id="CHEBI:29108"/>
        <label>2</label>
    </ligand>
</feature>
<feature type="binding site" evidence="5">
    <location>
        <position position="119"/>
    </location>
    <ligand>
        <name>Ca(2+)</name>
        <dbReference type="ChEBI" id="CHEBI:29108"/>
        <label>2</label>
    </ligand>
</feature>
<feature type="binding site" evidence="5">
    <location>
        <position position="121"/>
    </location>
    <ligand>
        <name>Ca(2+)</name>
        <dbReference type="ChEBI" id="CHEBI:29108"/>
        <label>2</label>
    </ligand>
</feature>
<feature type="binding site" evidence="5">
    <location>
        <position position="128"/>
    </location>
    <ligand>
        <name>Ca(2+)</name>
        <dbReference type="ChEBI" id="CHEBI:29108"/>
        <label>2</label>
    </ligand>
</feature>
<feature type="binding site" evidence="6">
    <location>
        <position position="164"/>
    </location>
    <ligand>
        <name>Ca(2+)</name>
        <dbReference type="ChEBI" id="CHEBI:29108"/>
        <label>3</label>
    </ligand>
</feature>
<feature type="binding site" evidence="6">
    <location>
        <position position="166"/>
    </location>
    <ligand>
        <name>Ca(2+)</name>
        <dbReference type="ChEBI" id="CHEBI:29108"/>
        <label>3</label>
    </ligand>
</feature>
<feature type="binding site" evidence="6">
    <location>
        <position position="168"/>
    </location>
    <ligand>
        <name>Ca(2+)</name>
        <dbReference type="ChEBI" id="CHEBI:29108"/>
        <label>3</label>
    </ligand>
</feature>
<feature type="binding site" evidence="6">
    <location>
        <position position="175"/>
    </location>
    <ligand>
        <name>Ca(2+)</name>
        <dbReference type="ChEBI" id="CHEBI:29108"/>
        <label>3</label>
    </ligand>
</feature>
<feature type="binding site" evidence="5">
    <location>
        <position position="201"/>
    </location>
    <ligand>
        <name>Ca(2+)</name>
        <dbReference type="ChEBI" id="CHEBI:29108"/>
        <label>4</label>
    </ligand>
</feature>
<feature type="binding site" evidence="5">
    <location>
        <position position="203"/>
    </location>
    <ligand>
        <name>Ca(2+)</name>
        <dbReference type="ChEBI" id="CHEBI:29108"/>
        <label>4</label>
    </ligand>
</feature>
<feature type="binding site" evidence="5">
    <location>
        <position position="205"/>
    </location>
    <ligand>
        <name>Ca(2+)</name>
        <dbReference type="ChEBI" id="CHEBI:29108"/>
        <label>4</label>
    </ligand>
</feature>
<feature type="binding site" evidence="5">
    <location>
        <position position="212"/>
    </location>
    <ligand>
        <name>Ca(2+)</name>
        <dbReference type="ChEBI" id="CHEBI:29108"/>
        <label>4</label>
    </ligand>
</feature>
<feature type="binding site" evidence="6">
    <location>
        <position position="242"/>
    </location>
    <ligand>
        <name>Ca(2+)</name>
        <dbReference type="ChEBI" id="CHEBI:29108"/>
        <label>5</label>
    </ligand>
</feature>
<feature type="binding site" evidence="6">
    <location>
        <position position="244"/>
    </location>
    <ligand>
        <name>Ca(2+)</name>
        <dbReference type="ChEBI" id="CHEBI:29108"/>
        <label>5</label>
    </ligand>
</feature>
<feature type="binding site" evidence="6">
    <location>
        <position position="246"/>
    </location>
    <ligand>
        <name>Ca(2+)</name>
        <dbReference type="ChEBI" id="CHEBI:29108"/>
        <label>5</label>
    </ligand>
</feature>
<feature type="binding site" evidence="6">
    <location>
        <position position="248"/>
    </location>
    <ligand>
        <name>Ca(2+)</name>
        <dbReference type="ChEBI" id="CHEBI:29108"/>
        <label>5</label>
    </ligand>
</feature>
<feature type="binding site" evidence="6">
    <location>
        <position position="253"/>
    </location>
    <ligand>
        <name>Ca(2+)</name>
        <dbReference type="ChEBI" id="CHEBI:29108"/>
        <label>5</label>
    </ligand>
</feature>
<feature type="binding site" evidence="5">
    <location>
        <position position="278"/>
    </location>
    <ligand>
        <name>Ca(2+)</name>
        <dbReference type="ChEBI" id="CHEBI:29108"/>
        <label>6</label>
    </ligand>
</feature>
<feature type="binding site" evidence="5">
    <location>
        <position position="280"/>
    </location>
    <ligand>
        <name>Ca(2+)</name>
        <dbReference type="ChEBI" id="CHEBI:29108"/>
        <label>6</label>
    </ligand>
</feature>
<feature type="binding site" evidence="5">
    <location>
        <position position="282"/>
    </location>
    <ligand>
        <name>Ca(2+)</name>
        <dbReference type="ChEBI" id="CHEBI:29108"/>
        <label>6</label>
    </ligand>
</feature>
<feature type="binding site" evidence="5">
    <location>
        <position position="284"/>
    </location>
    <ligand>
        <name>Ca(2+)</name>
        <dbReference type="ChEBI" id="CHEBI:29108"/>
        <label>6</label>
    </ligand>
</feature>
<feature type="binding site" evidence="5">
    <location>
        <position position="289"/>
    </location>
    <ligand>
        <name>Ca(2+)</name>
        <dbReference type="ChEBI" id="CHEBI:29108"/>
        <label>6</label>
    </ligand>
</feature>
<feature type="modified residue" description="Phosphotyrosine" evidence="3">
    <location>
        <position position="47"/>
    </location>
</feature>
<feature type="modified residue" description="Phosphothreonine" evidence="3">
    <location>
        <position position="65"/>
    </location>
</feature>
<feature type="modified residue" description="Phosphoserine" evidence="3">
    <location>
        <position position="69"/>
    </location>
</feature>
<feature type="modified residue" description="N6-acetyllysine" evidence="2">
    <location>
        <position position="165"/>
    </location>
</feature>
<feature type="modified residue" description="Phosphothreonine" evidence="3">
    <location>
        <position position="254"/>
    </location>
</feature>
<feature type="modified residue" description="Phosphoserine" evidence="3">
    <location>
        <position position="261"/>
    </location>
</feature>
<feature type="modified residue" description="Phosphoserine" evidence="3">
    <location>
        <position position="277"/>
    </location>
</feature>
<feature type="glycosylation site" description="N-linked (GlcNAc...) asparagine" evidence="4">
    <location>
        <position position="131"/>
    </location>
</feature>